<protein>
    <recommendedName>
        <fullName evidence="1">Protein PsbN</fullName>
    </recommendedName>
</protein>
<geneLocation type="chloroplast"/>
<reference key="1">
    <citation type="journal article" date="2005" name="BMC Biol.">
        <title>The complete chloroplast DNA sequences of the charophycean green algae Staurastrum and Zygnema reveal that the chloroplast genome underwent extensive changes during the evolution of the Zygnematales.</title>
        <authorList>
            <person name="Turmel M."/>
            <person name="Otis C."/>
            <person name="Lemieux C."/>
        </authorList>
    </citation>
    <scope>NUCLEOTIDE SEQUENCE [LARGE SCALE GENOMIC DNA]</scope>
</reference>
<evidence type="ECO:0000255" key="1">
    <source>
        <dbReference type="HAMAP-Rule" id="MF_00293"/>
    </source>
</evidence>
<comment type="function">
    <text evidence="1">May play a role in photosystem I and II biogenesis.</text>
</comment>
<comment type="subcellular location">
    <subcellularLocation>
        <location evidence="1">Plastid</location>
        <location evidence="1">Chloroplast thylakoid membrane</location>
        <topology evidence="1">Single-pass membrane protein</topology>
    </subcellularLocation>
</comment>
<comment type="similarity">
    <text evidence="1">Belongs to the PsbN family.</text>
</comment>
<comment type="caution">
    <text evidence="1">Originally thought to be a component of PSII; based on experiments in Synechocystis, N.tabacum and barley, and its absence from PSII in T.elongatus and T.vulcanus, this is probably not true.</text>
</comment>
<accession>Q32RQ4</accession>
<proteinExistence type="inferred from homology"/>
<name>PSBN_ZYGCR</name>
<gene>
    <name evidence="1" type="primary">psbN</name>
</gene>
<feature type="chain" id="PRO_0000232781" description="Protein PsbN">
    <location>
        <begin position="1"/>
        <end position="43"/>
    </location>
</feature>
<feature type="transmembrane region" description="Helical" evidence="1">
    <location>
        <begin position="7"/>
        <end position="27"/>
    </location>
</feature>
<keyword id="KW-0150">Chloroplast</keyword>
<keyword id="KW-0472">Membrane</keyword>
<keyword id="KW-0934">Plastid</keyword>
<keyword id="KW-0793">Thylakoid</keyword>
<keyword id="KW-0812">Transmembrane</keyword>
<keyword id="KW-1133">Transmembrane helix</keyword>
<organism>
    <name type="scientific">Zygnema circumcarinatum</name>
    <name type="common">Green alga</name>
    <dbReference type="NCBI Taxonomy" id="35869"/>
    <lineage>
        <taxon>Eukaryota</taxon>
        <taxon>Viridiplantae</taxon>
        <taxon>Streptophyta</taxon>
        <taxon>Zygnematophyceae</taxon>
        <taxon>Zygnematophycidae</taxon>
        <taxon>Zygnematales</taxon>
        <taxon>Zygnemataceae</taxon>
        <taxon>Zygnema</taxon>
    </lineage>
</organism>
<dbReference type="EMBL" id="AY958086">
    <property type="protein sequence ID" value="AAX45848.1"/>
    <property type="molecule type" value="Genomic_DNA"/>
</dbReference>
<dbReference type="RefSeq" id="YP_636472.1">
    <property type="nucleotide sequence ID" value="NC_008117.1"/>
</dbReference>
<dbReference type="SMR" id="Q32RQ4"/>
<dbReference type="GeneID" id="4108168"/>
<dbReference type="GO" id="GO:0009535">
    <property type="term" value="C:chloroplast thylakoid membrane"/>
    <property type="evidence" value="ECO:0007669"/>
    <property type="project" value="UniProtKB-SubCell"/>
</dbReference>
<dbReference type="GO" id="GO:0015979">
    <property type="term" value="P:photosynthesis"/>
    <property type="evidence" value="ECO:0007669"/>
    <property type="project" value="InterPro"/>
</dbReference>
<dbReference type="HAMAP" id="MF_00293">
    <property type="entry name" value="PSII_PsbN"/>
    <property type="match status" value="1"/>
</dbReference>
<dbReference type="InterPro" id="IPR003398">
    <property type="entry name" value="PSII_PsbN"/>
</dbReference>
<dbReference type="PANTHER" id="PTHR35326">
    <property type="entry name" value="PROTEIN PSBN"/>
    <property type="match status" value="1"/>
</dbReference>
<dbReference type="PANTHER" id="PTHR35326:SF3">
    <property type="entry name" value="PROTEIN PSBN"/>
    <property type="match status" value="1"/>
</dbReference>
<dbReference type="Pfam" id="PF02468">
    <property type="entry name" value="PsbN"/>
    <property type="match status" value="1"/>
</dbReference>
<sequence>METATLVAIFISCLLVSFTGYALYTAFGQPSKELRDPFEEHED</sequence>